<proteinExistence type="inferred from homology"/>
<organism>
    <name type="scientific">Streptomyces avermitilis (strain ATCC 31267 / DSM 46492 / JCM 5070 / NBRC 14893 / NCIMB 12804 / NRRL 8165 / MA-4680)</name>
    <dbReference type="NCBI Taxonomy" id="227882"/>
    <lineage>
        <taxon>Bacteria</taxon>
        <taxon>Bacillati</taxon>
        <taxon>Actinomycetota</taxon>
        <taxon>Actinomycetes</taxon>
        <taxon>Kitasatosporales</taxon>
        <taxon>Streptomycetaceae</taxon>
        <taxon>Streptomyces</taxon>
    </lineage>
</organism>
<dbReference type="EC" id="2.1.2.10" evidence="1"/>
<dbReference type="EMBL" id="BA000030">
    <property type="protein sequence ID" value="BAC70484.1"/>
    <property type="molecule type" value="Genomic_DNA"/>
</dbReference>
<dbReference type="RefSeq" id="WP_010984205.1">
    <property type="nucleotide sequence ID" value="NZ_JZJK01000071.1"/>
</dbReference>
<dbReference type="SMR" id="Q82JI2"/>
<dbReference type="GeneID" id="41539860"/>
<dbReference type="KEGG" id="sma:SAVERM_2773"/>
<dbReference type="eggNOG" id="COG0404">
    <property type="taxonomic scope" value="Bacteria"/>
</dbReference>
<dbReference type="HOGENOM" id="CLU_007884_10_2_11"/>
<dbReference type="OrthoDB" id="9774591at2"/>
<dbReference type="Proteomes" id="UP000000428">
    <property type="component" value="Chromosome"/>
</dbReference>
<dbReference type="GO" id="GO:0005829">
    <property type="term" value="C:cytosol"/>
    <property type="evidence" value="ECO:0007669"/>
    <property type="project" value="TreeGrafter"/>
</dbReference>
<dbReference type="GO" id="GO:0005960">
    <property type="term" value="C:glycine cleavage complex"/>
    <property type="evidence" value="ECO:0007669"/>
    <property type="project" value="InterPro"/>
</dbReference>
<dbReference type="GO" id="GO:0004047">
    <property type="term" value="F:aminomethyltransferase activity"/>
    <property type="evidence" value="ECO:0007669"/>
    <property type="project" value="UniProtKB-UniRule"/>
</dbReference>
<dbReference type="GO" id="GO:0008483">
    <property type="term" value="F:transaminase activity"/>
    <property type="evidence" value="ECO:0007669"/>
    <property type="project" value="UniProtKB-KW"/>
</dbReference>
<dbReference type="GO" id="GO:0019464">
    <property type="term" value="P:glycine decarboxylation via glycine cleavage system"/>
    <property type="evidence" value="ECO:0007669"/>
    <property type="project" value="UniProtKB-UniRule"/>
</dbReference>
<dbReference type="FunFam" id="2.40.30.110:FF:000003">
    <property type="entry name" value="Aminomethyltransferase"/>
    <property type="match status" value="1"/>
</dbReference>
<dbReference type="FunFam" id="3.30.70.1400:FF:000001">
    <property type="entry name" value="Aminomethyltransferase"/>
    <property type="match status" value="1"/>
</dbReference>
<dbReference type="FunFam" id="4.10.1250.10:FF:000001">
    <property type="entry name" value="Aminomethyltransferase"/>
    <property type="match status" value="1"/>
</dbReference>
<dbReference type="Gene3D" id="2.40.30.110">
    <property type="entry name" value="Aminomethyltransferase beta-barrel domains"/>
    <property type="match status" value="1"/>
</dbReference>
<dbReference type="Gene3D" id="3.30.70.1400">
    <property type="entry name" value="Aminomethyltransferase beta-barrel domains"/>
    <property type="match status" value="1"/>
</dbReference>
<dbReference type="Gene3D" id="4.10.1250.10">
    <property type="entry name" value="Aminomethyltransferase fragment"/>
    <property type="match status" value="1"/>
</dbReference>
<dbReference type="Gene3D" id="3.30.1360.120">
    <property type="entry name" value="Probable tRNA modification gtpase trme, domain 1"/>
    <property type="match status" value="1"/>
</dbReference>
<dbReference type="HAMAP" id="MF_00259">
    <property type="entry name" value="GcvT"/>
    <property type="match status" value="1"/>
</dbReference>
<dbReference type="InterPro" id="IPR006223">
    <property type="entry name" value="GCS_T"/>
</dbReference>
<dbReference type="InterPro" id="IPR022903">
    <property type="entry name" value="GCS_T_bac"/>
</dbReference>
<dbReference type="InterPro" id="IPR013977">
    <property type="entry name" value="GCST_C"/>
</dbReference>
<dbReference type="InterPro" id="IPR006222">
    <property type="entry name" value="GCV_T_N"/>
</dbReference>
<dbReference type="InterPro" id="IPR028896">
    <property type="entry name" value="GcvT/YgfZ/DmdA"/>
</dbReference>
<dbReference type="InterPro" id="IPR029043">
    <property type="entry name" value="GcvT/YgfZ_C"/>
</dbReference>
<dbReference type="InterPro" id="IPR027266">
    <property type="entry name" value="TrmE/GcvT_dom1"/>
</dbReference>
<dbReference type="NCBIfam" id="TIGR00528">
    <property type="entry name" value="gcvT"/>
    <property type="match status" value="1"/>
</dbReference>
<dbReference type="NCBIfam" id="NF001567">
    <property type="entry name" value="PRK00389.1"/>
    <property type="match status" value="1"/>
</dbReference>
<dbReference type="PANTHER" id="PTHR43757">
    <property type="entry name" value="AMINOMETHYLTRANSFERASE"/>
    <property type="match status" value="1"/>
</dbReference>
<dbReference type="PANTHER" id="PTHR43757:SF2">
    <property type="entry name" value="AMINOMETHYLTRANSFERASE, MITOCHONDRIAL"/>
    <property type="match status" value="1"/>
</dbReference>
<dbReference type="Pfam" id="PF01571">
    <property type="entry name" value="GCV_T"/>
    <property type="match status" value="1"/>
</dbReference>
<dbReference type="Pfam" id="PF08669">
    <property type="entry name" value="GCV_T_C"/>
    <property type="match status" value="1"/>
</dbReference>
<dbReference type="PIRSF" id="PIRSF006487">
    <property type="entry name" value="GcvT"/>
    <property type="match status" value="1"/>
</dbReference>
<dbReference type="SUPFAM" id="SSF101790">
    <property type="entry name" value="Aminomethyltransferase beta-barrel domain"/>
    <property type="match status" value="1"/>
</dbReference>
<dbReference type="SUPFAM" id="SSF103025">
    <property type="entry name" value="Folate-binding domain"/>
    <property type="match status" value="1"/>
</dbReference>
<reference key="1">
    <citation type="journal article" date="2001" name="Proc. Natl. Acad. Sci. U.S.A.">
        <title>Genome sequence of an industrial microorganism Streptomyces avermitilis: deducing the ability of producing secondary metabolites.</title>
        <authorList>
            <person name="Omura S."/>
            <person name="Ikeda H."/>
            <person name="Ishikawa J."/>
            <person name="Hanamoto A."/>
            <person name="Takahashi C."/>
            <person name="Shinose M."/>
            <person name="Takahashi Y."/>
            <person name="Horikawa H."/>
            <person name="Nakazawa H."/>
            <person name="Osonoe T."/>
            <person name="Kikuchi H."/>
            <person name="Shiba T."/>
            <person name="Sakaki Y."/>
            <person name="Hattori M."/>
        </authorList>
    </citation>
    <scope>NUCLEOTIDE SEQUENCE [LARGE SCALE GENOMIC DNA]</scope>
    <source>
        <strain>ATCC 31267 / DSM 46492 / JCM 5070 / NBRC 14893 / NCIMB 12804 / NRRL 8165 / MA-4680</strain>
    </source>
</reference>
<reference key="2">
    <citation type="journal article" date="2003" name="Nat. Biotechnol.">
        <title>Complete genome sequence and comparative analysis of the industrial microorganism Streptomyces avermitilis.</title>
        <authorList>
            <person name="Ikeda H."/>
            <person name="Ishikawa J."/>
            <person name="Hanamoto A."/>
            <person name="Shinose M."/>
            <person name="Kikuchi H."/>
            <person name="Shiba T."/>
            <person name="Sakaki Y."/>
            <person name="Hattori M."/>
            <person name="Omura S."/>
        </authorList>
    </citation>
    <scope>NUCLEOTIDE SEQUENCE [LARGE SCALE GENOMIC DNA]</scope>
    <source>
        <strain>ATCC 31267 / DSM 46492 / JCM 5070 / NBRC 14893 / NCIMB 12804 / NRRL 8165 / MA-4680</strain>
    </source>
</reference>
<comment type="function">
    <text evidence="1">The glycine cleavage system catalyzes the degradation of glycine.</text>
</comment>
<comment type="catalytic activity">
    <reaction evidence="1">
        <text>N(6)-[(R)-S(8)-aminomethyldihydrolipoyl]-L-lysyl-[protein] + (6S)-5,6,7,8-tetrahydrofolate = N(6)-[(R)-dihydrolipoyl]-L-lysyl-[protein] + (6R)-5,10-methylene-5,6,7,8-tetrahydrofolate + NH4(+)</text>
        <dbReference type="Rhea" id="RHEA:16945"/>
        <dbReference type="Rhea" id="RHEA-COMP:10475"/>
        <dbReference type="Rhea" id="RHEA-COMP:10492"/>
        <dbReference type="ChEBI" id="CHEBI:15636"/>
        <dbReference type="ChEBI" id="CHEBI:28938"/>
        <dbReference type="ChEBI" id="CHEBI:57453"/>
        <dbReference type="ChEBI" id="CHEBI:83100"/>
        <dbReference type="ChEBI" id="CHEBI:83143"/>
        <dbReference type="EC" id="2.1.2.10"/>
    </reaction>
</comment>
<comment type="subunit">
    <text evidence="1">The glycine cleavage system is composed of four proteins: P, T, L and H.</text>
</comment>
<comment type="similarity">
    <text evidence="1">Belongs to the GcvT family.</text>
</comment>
<gene>
    <name evidence="1" type="primary">gcvT</name>
    <name type="ordered locus">SAV_2773</name>
</gene>
<protein>
    <recommendedName>
        <fullName evidence="1">Aminomethyltransferase</fullName>
        <ecNumber evidence="1">2.1.2.10</ecNumber>
    </recommendedName>
    <alternativeName>
        <fullName evidence="1">Glycine cleavage system T protein</fullName>
    </alternativeName>
</protein>
<feature type="chain" id="PRO_0000122603" description="Aminomethyltransferase">
    <location>
        <begin position="1"/>
        <end position="372"/>
    </location>
</feature>
<sequence length="372" mass="39087">MSSNAPRHTALDALHRSLGATMTDFAGWDMPLRYGSERDEHLAVRSKAGLFDLSHMGEITVTGPGAAALLNYALVGNIASVGVGRARYTMICRADGGILDDLIVYRLQEQTYLVVANASNAQVVLDALTERAGGFDAVVRDDRDAYALIAVQGPESPGILKSLTDADLDGLKYYAGLPGTVAGVPALIARTGYTGEDGFELFVDPADAEKLWQALTEAGAPAGLVPCGLSCRDTLRLEAGMPLYGHELSTSLTPFDAGLGRVVKFEKEGDFVGREALTEAAALAEKNPPRVLVGLIAEGRRVPRAGYPVVVGGEVIGEVTSGAPSPTLGRPIAMAYVDAAHAAPGTAGVGVDIRGSHEPYEVVALPFYRRQK</sequence>
<name>GCST_STRAW</name>
<accession>Q82JI2</accession>
<evidence type="ECO:0000255" key="1">
    <source>
        <dbReference type="HAMAP-Rule" id="MF_00259"/>
    </source>
</evidence>
<keyword id="KW-0032">Aminotransferase</keyword>
<keyword id="KW-1185">Reference proteome</keyword>
<keyword id="KW-0808">Transferase</keyword>